<evidence type="ECO:0000255" key="1">
    <source>
        <dbReference type="HAMAP-Rule" id="MF_00163"/>
    </source>
</evidence>
<evidence type="ECO:0007829" key="2">
    <source>
        <dbReference type="PDB" id="3QU1"/>
    </source>
</evidence>
<organism>
    <name type="scientific">Vibrio cholerae serotype O1 (strain ATCC 39315 / El Tor Inaba N16961)</name>
    <dbReference type="NCBI Taxonomy" id="243277"/>
    <lineage>
        <taxon>Bacteria</taxon>
        <taxon>Pseudomonadati</taxon>
        <taxon>Pseudomonadota</taxon>
        <taxon>Gammaproteobacteria</taxon>
        <taxon>Vibrionales</taxon>
        <taxon>Vibrionaceae</taxon>
        <taxon>Vibrio</taxon>
    </lineage>
</organism>
<keyword id="KW-0002">3D-structure</keyword>
<keyword id="KW-0378">Hydrolase</keyword>
<keyword id="KW-0408">Iron</keyword>
<keyword id="KW-0479">Metal-binding</keyword>
<keyword id="KW-0648">Protein biosynthesis</keyword>
<keyword id="KW-1185">Reference proteome</keyword>
<feature type="chain" id="PRO_0000082874" description="Peptide deformylase 2">
    <location>
        <begin position="1"/>
        <end position="168"/>
    </location>
</feature>
<feature type="active site" evidence="1">
    <location>
        <position position="134"/>
    </location>
</feature>
<feature type="binding site" evidence="1">
    <location>
        <position position="91"/>
    </location>
    <ligand>
        <name>Fe cation</name>
        <dbReference type="ChEBI" id="CHEBI:24875"/>
    </ligand>
</feature>
<feature type="binding site" evidence="1">
    <location>
        <position position="133"/>
    </location>
    <ligand>
        <name>Fe cation</name>
        <dbReference type="ChEBI" id="CHEBI:24875"/>
    </ligand>
</feature>
<feature type="binding site" evidence="1">
    <location>
        <position position="137"/>
    </location>
    <ligand>
        <name>Fe cation</name>
        <dbReference type="ChEBI" id="CHEBI:24875"/>
    </ligand>
</feature>
<feature type="helix" evidence="2">
    <location>
        <begin position="12"/>
        <end position="15"/>
    </location>
</feature>
<feature type="helix" evidence="2">
    <location>
        <begin position="24"/>
        <end position="27"/>
    </location>
</feature>
<feature type="helix" evidence="2">
    <location>
        <begin position="28"/>
        <end position="40"/>
    </location>
</feature>
<feature type="strand" evidence="2">
    <location>
        <begin position="41"/>
        <end position="43"/>
    </location>
</feature>
<feature type="strand" evidence="2">
    <location>
        <begin position="46"/>
        <end position="48"/>
    </location>
</feature>
<feature type="helix" evidence="2">
    <location>
        <begin position="49"/>
        <end position="52"/>
    </location>
</feature>
<feature type="strand" evidence="2">
    <location>
        <begin position="58"/>
        <end position="61"/>
    </location>
</feature>
<feature type="strand" evidence="2">
    <location>
        <begin position="65"/>
        <end position="67"/>
    </location>
</feature>
<feature type="strand" evidence="2">
    <location>
        <begin position="71"/>
        <end position="89"/>
    </location>
</feature>
<feature type="strand" evidence="2">
    <location>
        <begin position="99"/>
        <end position="112"/>
    </location>
</feature>
<feature type="strand" evidence="2">
    <location>
        <begin position="118"/>
        <end position="123"/>
    </location>
</feature>
<feature type="helix" evidence="2">
    <location>
        <begin position="127"/>
        <end position="138"/>
    </location>
</feature>
<feature type="helix" evidence="2">
    <location>
        <begin position="143"/>
        <end position="146"/>
    </location>
</feature>
<feature type="helix" evidence="2">
    <location>
        <begin position="149"/>
        <end position="164"/>
    </location>
</feature>
<reference key="1">
    <citation type="journal article" date="2000" name="Nature">
        <title>DNA sequence of both chromosomes of the cholera pathogen Vibrio cholerae.</title>
        <authorList>
            <person name="Heidelberg J.F."/>
            <person name="Eisen J.A."/>
            <person name="Nelson W.C."/>
            <person name="Clayton R.A."/>
            <person name="Gwinn M.L."/>
            <person name="Dodson R.J."/>
            <person name="Haft D.H."/>
            <person name="Hickey E.K."/>
            <person name="Peterson J.D."/>
            <person name="Umayam L.A."/>
            <person name="Gill S.R."/>
            <person name="Nelson K.E."/>
            <person name="Read T.D."/>
            <person name="Tettelin H."/>
            <person name="Richardson D.L."/>
            <person name="Ermolaeva M.D."/>
            <person name="Vamathevan J.J."/>
            <person name="Bass S."/>
            <person name="Qin H."/>
            <person name="Dragoi I."/>
            <person name="Sellers P."/>
            <person name="McDonald L.A."/>
            <person name="Utterback T.R."/>
            <person name="Fleischmann R.D."/>
            <person name="Nierman W.C."/>
            <person name="White O."/>
            <person name="Salzberg S.L."/>
            <person name="Smith H.O."/>
            <person name="Colwell R.R."/>
            <person name="Mekalanos J.J."/>
            <person name="Venter J.C."/>
            <person name="Fraser C.M."/>
        </authorList>
    </citation>
    <scope>NUCLEOTIDE SEQUENCE [LARGE SCALE GENOMIC DNA]</scope>
    <source>
        <strain>ATCC 39315 / El Tor Inaba N16961</strain>
    </source>
</reference>
<comment type="function">
    <text evidence="1">Removes the formyl group from the N-terminal Met of newly synthesized proteins. Requires at least a dipeptide for an efficient rate of reaction. N-terminal L-methionine is a prerequisite for activity but the enzyme has broad specificity at other positions.</text>
</comment>
<comment type="catalytic activity">
    <reaction evidence="1">
        <text>N-terminal N-formyl-L-methionyl-[peptide] + H2O = N-terminal L-methionyl-[peptide] + formate</text>
        <dbReference type="Rhea" id="RHEA:24420"/>
        <dbReference type="Rhea" id="RHEA-COMP:10639"/>
        <dbReference type="Rhea" id="RHEA-COMP:10640"/>
        <dbReference type="ChEBI" id="CHEBI:15377"/>
        <dbReference type="ChEBI" id="CHEBI:15740"/>
        <dbReference type="ChEBI" id="CHEBI:49298"/>
        <dbReference type="ChEBI" id="CHEBI:64731"/>
        <dbReference type="EC" id="3.5.1.88"/>
    </reaction>
</comment>
<comment type="cofactor">
    <cofactor evidence="1">
        <name>Fe(2+)</name>
        <dbReference type="ChEBI" id="CHEBI:29033"/>
    </cofactor>
    <text evidence="1">Binds 1 Fe(2+) ion.</text>
</comment>
<comment type="similarity">
    <text evidence="1">Belongs to the polypeptide deformylase family.</text>
</comment>
<protein>
    <recommendedName>
        <fullName evidence="1">Peptide deformylase 2</fullName>
        <shortName evidence="1">PDF 2</shortName>
        <ecNumber evidence="1">3.5.1.88</ecNumber>
    </recommendedName>
    <alternativeName>
        <fullName evidence="1">Polypeptide deformylase 2</fullName>
    </alternativeName>
</protein>
<name>DEF2_VIBCH</name>
<proteinExistence type="evidence at protein level"/>
<sequence length="168" mass="18671">MAVLEILTAPDPRLRVQSKQVTDVASVQTLIDDLLDTLYATDNGIGLAAPQVGREEAIVVIDLSDNRDQPLVLINPKVVSGSNKEMGQEGCLSVPDYYADVERYTSVVVEALDREGKPLRIETSDFLAIVMQHEIDHLSGNLFIDYLSPLKQQMAMKKVKKHVKNRAR</sequence>
<gene>
    <name evidence="1" type="primary">def2</name>
    <name type="ordered locus">VC_A0150</name>
</gene>
<dbReference type="EC" id="3.5.1.88" evidence="1"/>
<dbReference type="EMBL" id="AE003853">
    <property type="protein sequence ID" value="AAF96063.1"/>
    <property type="molecule type" value="Genomic_DNA"/>
</dbReference>
<dbReference type="PIR" id="C82494">
    <property type="entry name" value="C82494"/>
</dbReference>
<dbReference type="RefSeq" id="NP_232550.1">
    <property type="nucleotide sequence ID" value="NC_002506.1"/>
</dbReference>
<dbReference type="PDB" id="3QU1">
    <property type="method" value="X-ray"/>
    <property type="resolution" value="1.80 A"/>
    <property type="chains" value="A/B=1-168"/>
</dbReference>
<dbReference type="PDBsum" id="3QU1"/>
<dbReference type="SMR" id="Q9KN16"/>
<dbReference type="STRING" id="243277.VC_A0150"/>
<dbReference type="DNASU" id="2612555"/>
<dbReference type="EnsemblBacteria" id="AAF96063">
    <property type="protein sequence ID" value="AAF96063"/>
    <property type="gene ID" value="VC_A0150"/>
</dbReference>
<dbReference type="KEGG" id="vch:VC_A0150"/>
<dbReference type="PATRIC" id="fig|243277.26.peg.2788"/>
<dbReference type="eggNOG" id="COG0242">
    <property type="taxonomic scope" value="Bacteria"/>
</dbReference>
<dbReference type="HOGENOM" id="CLU_061901_2_1_6"/>
<dbReference type="EvolutionaryTrace" id="Q9KN16"/>
<dbReference type="Proteomes" id="UP000000584">
    <property type="component" value="Chromosome 2"/>
</dbReference>
<dbReference type="GO" id="GO:0046872">
    <property type="term" value="F:metal ion binding"/>
    <property type="evidence" value="ECO:0007669"/>
    <property type="project" value="UniProtKB-KW"/>
</dbReference>
<dbReference type="GO" id="GO:0042586">
    <property type="term" value="F:peptide deformylase activity"/>
    <property type="evidence" value="ECO:0000318"/>
    <property type="project" value="GO_Central"/>
</dbReference>
<dbReference type="GO" id="GO:0043686">
    <property type="term" value="P:co-translational protein modification"/>
    <property type="evidence" value="ECO:0000318"/>
    <property type="project" value="GO_Central"/>
</dbReference>
<dbReference type="GO" id="GO:0006412">
    <property type="term" value="P:translation"/>
    <property type="evidence" value="ECO:0007669"/>
    <property type="project" value="UniProtKB-UniRule"/>
</dbReference>
<dbReference type="CDD" id="cd00487">
    <property type="entry name" value="Pep_deformylase"/>
    <property type="match status" value="1"/>
</dbReference>
<dbReference type="FunFam" id="3.90.45.10:FF:000001">
    <property type="entry name" value="Peptide deformylase"/>
    <property type="match status" value="1"/>
</dbReference>
<dbReference type="Gene3D" id="3.90.45.10">
    <property type="entry name" value="Peptide deformylase"/>
    <property type="match status" value="1"/>
</dbReference>
<dbReference type="HAMAP" id="MF_00163">
    <property type="entry name" value="Pep_deformylase"/>
    <property type="match status" value="1"/>
</dbReference>
<dbReference type="InterPro" id="IPR023635">
    <property type="entry name" value="Peptide_deformylase"/>
</dbReference>
<dbReference type="InterPro" id="IPR036821">
    <property type="entry name" value="Peptide_deformylase_sf"/>
</dbReference>
<dbReference type="NCBIfam" id="TIGR00079">
    <property type="entry name" value="pept_deformyl"/>
    <property type="match status" value="1"/>
</dbReference>
<dbReference type="NCBIfam" id="NF001159">
    <property type="entry name" value="PRK00150.1-3"/>
    <property type="match status" value="1"/>
</dbReference>
<dbReference type="PANTHER" id="PTHR10458">
    <property type="entry name" value="PEPTIDE DEFORMYLASE"/>
    <property type="match status" value="1"/>
</dbReference>
<dbReference type="PANTHER" id="PTHR10458:SF22">
    <property type="entry name" value="PEPTIDE DEFORMYLASE"/>
    <property type="match status" value="1"/>
</dbReference>
<dbReference type="Pfam" id="PF01327">
    <property type="entry name" value="Pep_deformylase"/>
    <property type="match status" value="1"/>
</dbReference>
<dbReference type="PIRSF" id="PIRSF004749">
    <property type="entry name" value="Pep_def"/>
    <property type="match status" value="1"/>
</dbReference>
<dbReference type="PRINTS" id="PR01576">
    <property type="entry name" value="PDEFORMYLASE"/>
</dbReference>
<dbReference type="SUPFAM" id="SSF56420">
    <property type="entry name" value="Peptide deformylase"/>
    <property type="match status" value="1"/>
</dbReference>
<accession>Q9KN16</accession>